<accession>B1GYY3</accession>
<proteinExistence type="inferred from homology"/>
<dbReference type="EC" id="1.3.1.14"/>
<dbReference type="EMBL" id="AP009510">
    <property type="protein sequence ID" value="BAG14226.1"/>
    <property type="molecule type" value="Genomic_DNA"/>
</dbReference>
<dbReference type="RefSeq" id="WP_015423747.1">
    <property type="nucleotide sequence ID" value="NC_020419.1"/>
</dbReference>
<dbReference type="SMR" id="B1GYY3"/>
<dbReference type="STRING" id="471821.TGRD_743"/>
<dbReference type="KEGG" id="rsd:TGRD_743"/>
<dbReference type="HOGENOM" id="CLU_042042_4_3_0"/>
<dbReference type="UniPathway" id="UPA00070">
    <property type="reaction ID" value="UER00945"/>
</dbReference>
<dbReference type="Proteomes" id="UP000001691">
    <property type="component" value="Chromosome"/>
</dbReference>
<dbReference type="GO" id="GO:0005737">
    <property type="term" value="C:cytoplasm"/>
    <property type="evidence" value="ECO:0007669"/>
    <property type="project" value="UniProtKB-SubCell"/>
</dbReference>
<dbReference type="GO" id="GO:0004589">
    <property type="term" value="F:dihydroorotate dehydrogenase (NAD+) activity"/>
    <property type="evidence" value="ECO:0007669"/>
    <property type="project" value="UniProtKB-EC"/>
</dbReference>
<dbReference type="GO" id="GO:0006207">
    <property type="term" value="P:'de novo' pyrimidine nucleobase biosynthetic process"/>
    <property type="evidence" value="ECO:0007669"/>
    <property type="project" value="InterPro"/>
</dbReference>
<dbReference type="GO" id="GO:0044205">
    <property type="term" value="P:'de novo' UMP biosynthetic process"/>
    <property type="evidence" value="ECO:0007669"/>
    <property type="project" value="UniProtKB-UniRule"/>
</dbReference>
<dbReference type="CDD" id="cd04740">
    <property type="entry name" value="DHOD_1B_like"/>
    <property type="match status" value="1"/>
</dbReference>
<dbReference type="FunFam" id="3.20.20.70:FF:000027">
    <property type="entry name" value="Dihydropyrimidine dehydrogenase [NADP(+)]"/>
    <property type="match status" value="1"/>
</dbReference>
<dbReference type="Gene3D" id="3.20.20.70">
    <property type="entry name" value="Aldolase class I"/>
    <property type="match status" value="1"/>
</dbReference>
<dbReference type="HAMAP" id="MF_00224">
    <property type="entry name" value="DHO_dh_type1"/>
    <property type="match status" value="1"/>
</dbReference>
<dbReference type="InterPro" id="IPR013785">
    <property type="entry name" value="Aldolase_TIM"/>
</dbReference>
<dbReference type="InterPro" id="IPR050074">
    <property type="entry name" value="DHO_dehydrogenase"/>
</dbReference>
<dbReference type="InterPro" id="IPR033888">
    <property type="entry name" value="DHOD_1B"/>
</dbReference>
<dbReference type="InterPro" id="IPR024920">
    <property type="entry name" value="Dihydroorotate_DH_1"/>
</dbReference>
<dbReference type="InterPro" id="IPR012135">
    <property type="entry name" value="Dihydroorotate_DH_1_2"/>
</dbReference>
<dbReference type="InterPro" id="IPR005720">
    <property type="entry name" value="Dihydroorotate_DH_cat"/>
</dbReference>
<dbReference type="InterPro" id="IPR001295">
    <property type="entry name" value="Dihydroorotate_DH_CS"/>
</dbReference>
<dbReference type="InterPro" id="IPR049622">
    <property type="entry name" value="Dihydroorotate_DH_I"/>
</dbReference>
<dbReference type="NCBIfam" id="NF005574">
    <property type="entry name" value="PRK07259.1"/>
    <property type="match status" value="1"/>
</dbReference>
<dbReference type="NCBIfam" id="TIGR01037">
    <property type="entry name" value="pyrD_sub1_fam"/>
    <property type="match status" value="1"/>
</dbReference>
<dbReference type="PANTHER" id="PTHR48109:SF1">
    <property type="entry name" value="DIHYDROOROTATE DEHYDROGENASE (FUMARATE)"/>
    <property type="match status" value="1"/>
</dbReference>
<dbReference type="PANTHER" id="PTHR48109">
    <property type="entry name" value="DIHYDROOROTATE DEHYDROGENASE (QUINONE), MITOCHONDRIAL-RELATED"/>
    <property type="match status" value="1"/>
</dbReference>
<dbReference type="Pfam" id="PF01180">
    <property type="entry name" value="DHO_dh"/>
    <property type="match status" value="1"/>
</dbReference>
<dbReference type="PIRSF" id="PIRSF000164">
    <property type="entry name" value="DHO_oxidase"/>
    <property type="match status" value="1"/>
</dbReference>
<dbReference type="SUPFAM" id="SSF51395">
    <property type="entry name" value="FMN-linked oxidoreductases"/>
    <property type="match status" value="1"/>
</dbReference>
<dbReference type="PROSITE" id="PS00911">
    <property type="entry name" value="DHODEHASE_1"/>
    <property type="match status" value="1"/>
</dbReference>
<gene>
    <name type="primary">pyrD</name>
    <name type="ordered locus">TGRD_743</name>
</gene>
<evidence type="ECO:0000250" key="1"/>
<evidence type="ECO:0000305" key="2"/>
<organism>
    <name type="scientific">Endomicrobium trichonymphae</name>
    <dbReference type="NCBI Taxonomy" id="1408204"/>
    <lineage>
        <taxon>Bacteria</taxon>
        <taxon>Pseudomonadati</taxon>
        <taxon>Elusimicrobiota</taxon>
        <taxon>Endomicrobiia</taxon>
        <taxon>Endomicrobiales</taxon>
        <taxon>Endomicrobiaceae</taxon>
        <taxon>Candidatus Endomicrobiellum</taxon>
    </lineage>
</organism>
<name>PYRDB_ENDTX</name>
<reference key="1">
    <citation type="journal article" date="2008" name="Proc. Natl. Acad. Sci. U.S.A.">
        <title>Complete genome of the uncultured termite group 1 bacteria in a single host protist cell.</title>
        <authorList>
            <person name="Hongoh Y."/>
            <person name="Sharma V.K."/>
            <person name="Prakash T."/>
            <person name="Noda S."/>
            <person name="Taylor T.D."/>
            <person name="Kudo T."/>
            <person name="Sakaki Y."/>
            <person name="Toyoda A."/>
            <person name="Hattori M."/>
            <person name="Ohkuma M."/>
        </authorList>
    </citation>
    <scope>NUCLEOTIDE SEQUENCE [LARGE SCALE GENOMIC DNA]</scope>
</reference>
<keyword id="KW-0963">Cytoplasm</keyword>
<keyword id="KW-0285">Flavoprotein</keyword>
<keyword id="KW-0288">FMN</keyword>
<keyword id="KW-0520">NAD</keyword>
<keyword id="KW-0560">Oxidoreductase</keyword>
<keyword id="KW-0665">Pyrimidine biosynthesis</keyword>
<comment type="function">
    <text evidence="1">Catalyzes the conversion of dihydroorotate to orotate with NAD(+) as electron acceptor.</text>
</comment>
<comment type="catalytic activity">
    <reaction>
        <text>(S)-dihydroorotate + NAD(+) = orotate + NADH + H(+)</text>
        <dbReference type="Rhea" id="RHEA:13513"/>
        <dbReference type="ChEBI" id="CHEBI:15378"/>
        <dbReference type="ChEBI" id="CHEBI:30839"/>
        <dbReference type="ChEBI" id="CHEBI:30864"/>
        <dbReference type="ChEBI" id="CHEBI:57540"/>
        <dbReference type="ChEBI" id="CHEBI:57945"/>
        <dbReference type="EC" id="1.3.1.14"/>
    </reaction>
</comment>
<comment type="cofactor">
    <cofactor evidence="1">
        <name>FMN</name>
        <dbReference type="ChEBI" id="CHEBI:58210"/>
    </cofactor>
    <text evidence="1">Binds 1 FMN per subunit.</text>
</comment>
<comment type="pathway">
    <text>Pyrimidine metabolism; UMP biosynthesis via de novo pathway; orotate from (S)-dihydroorotate (NAD(+) route): step 1/1.</text>
</comment>
<comment type="subunit">
    <text evidence="1">Heterotetramer of 2 PyrK and 2 PyrD type B subunits.</text>
</comment>
<comment type="subcellular location">
    <subcellularLocation>
        <location evidence="1">Cytoplasm</location>
    </subcellularLocation>
</comment>
<comment type="similarity">
    <text evidence="2">Belongs to the dihydroorotate dehydrogenase family. Type 1 subfamily.</text>
</comment>
<protein>
    <recommendedName>
        <fullName>Dihydroorotate dehydrogenase B (NAD(+)), catalytic subunit</fullName>
        <shortName>DHOD B</shortName>
        <shortName>DHODase B</shortName>
        <shortName>DHOdehase B</shortName>
        <ecNumber>1.3.1.14</ecNumber>
    </recommendedName>
    <alternativeName>
        <fullName>Dihydroorotate oxidase B</fullName>
    </alternativeName>
    <alternativeName>
        <fullName>Orotate reductase (NADH)</fullName>
    </alternativeName>
</protein>
<sequence>MIPDLSVNFAGIKLKNPVLTASGTFGYGYELADLIPLKRLGGVVTKTVTLEPRAGNLQPRIAEVASGILNSIGLQNIGVRAFIEEPLEKLNKIGVPVIVSVAGVAVGEYVEIVKILSSQNGVSAIELNLSCPNLKKKIVCHDLPLMRDVIRGVKKVSRVPVIAKLSPLVTDISELALTAQNAGADGVTLTNTYPAMAVDIRTFKPKLSTVKGGMSGACIKPMSVRCVYDAYQDIKIPIIGCGGIMMGEDAVEFILAGATAVSVGSSSLVSPGNLIAIIDGIEDILKEKNIKSVKKIIGGINKVRNA</sequence>
<feature type="chain" id="PRO_1000100239" description="Dihydroorotate dehydrogenase B (NAD(+)), catalytic subunit">
    <location>
        <begin position="1"/>
        <end position="306"/>
    </location>
</feature>
<feature type="active site" description="Nucleophile">
    <location>
        <position position="131"/>
    </location>
</feature>
<feature type="binding site" evidence="1">
    <location>
        <position position="22"/>
    </location>
    <ligand>
        <name>FMN</name>
        <dbReference type="ChEBI" id="CHEBI:58210"/>
    </ligand>
</feature>
<feature type="binding site" evidence="1">
    <location>
        <begin position="46"/>
        <end position="47"/>
    </location>
    <ligand>
        <name>FMN</name>
        <dbReference type="ChEBI" id="CHEBI:58210"/>
    </ligand>
</feature>
<feature type="binding site" evidence="1">
    <location>
        <position position="46"/>
    </location>
    <ligand>
        <name>substrate</name>
    </ligand>
</feature>
<feature type="binding site" evidence="1">
    <location>
        <begin position="70"/>
        <end position="74"/>
    </location>
    <ligand>
        <name>substrate</name>
    </ligand>
</feature>
<feature type="binding site" evidence="1">
    <location>
        <position position="128"/>
    </location>
    <ligand>
        <name>FMN</name>
        <dbReference type="ChEBI" id="CHEBI:58210"/>
    </ligand>
</feature>
<feature type="binding site" evidence="1">
    <location>
        <position position="128"/>
    </location>
    <ligand>
        <name>substrate</name>
    </ligand>
</feature>
<feature type="binding site" evidence="1">
    <location>
        <position position="164"/>
    </location>
    <ligand>
        <name>FMN</name>
        <dbReference type="ChEBI" id="CHEBI:58210"/>
    </ligand>
</feature>
<feature type="binding site" evidence="1">
    <location>
        <begin position="191"/>
        <end position="192"/>
    </location>
    <ligand>
        <name>substrate</name>
    </ligand>
</feature>
<feature type="binding site" evidence="1">
    <location>
        <position position="216"/>
    </location>
    <ligand>
        <name>FMN</name>
        <dbReference type="ChEBI" id="CHEBI:58210"/>
    </ligand>
</feature>
<feature type="binding site" evidence="1">
    <location>
        <begin position="242"/>
        <end position="243"/>
    </location>
    <ligand>
        <name>FMN</name>
        <dbReference type="ChEBI" id="CHEBI:58210"/>
    </ligand>
</feature>
<feature type="binding site" evidence="1">
    <location>
        <begin position="264"/>
        <end position="265"/>
    </location>
    <ligand>
        <name>FMN</name>
        <dbReference type="ChEBI" id="CHEBI:58210"/>
    </ligand>
</feature>